<keyword id="KW-0067">ATP-binding</keyword>
<keyword id="KW-0963">Cytoplasm</keyword>
<keyword id="KW-0436">Ligase</keyword>
<keyword id="KW-0547">Nucleotide-binding</keyword>
<keyword id="KW-0658">Purine biosynthesis</keyword>
<comment type="catalytic activity">
    <reaction evidence="1">
        <text>2-formamido-N(1)-(5-O-phospho-beta-D-ribosyl)acetamidine + ATP = 5-amino-1-(5-phospho-beta-D-ribosyl)imidazole + ADP + phosphate + H(+)</text>
        <dbReference type="Rhea" id="RHEA:23032"/>
        <dbReference type="ChEBI" id="CHEBI:15378"/>
        <dbReference type="ChEBI" id="CHEBI:30616"/>
        <dbReference type="ChEBI" id="CHEBI:43474"/>
        <dbReference type="ChEBI" id="CHEBI:137981"/>
        <dbReference type="ChEBI" id="CHEBI:147287"/>
        <dbReference type="ChEBI" id="CHEBI:456216"/>
        <dbReference type="EC" id="6.3.3.1"/>
    </reaction>
</comment>
<comment type="pathway">
    <text evidence="1">Purine metabolism; IMP biosynthesis via de novo pathway; 5-amino-1-(5-phospho-D-ribosyl)imidazole from N(2)-formyl-N(1)-(5-phospho-D-ribosyl)glycinamide: step 2/2.</text>
</comment>
<comment type="subcellular location">
    <subcellularLocation>
        <location evidence="1">Cytoplasm</location>
    </subcellularLocation>
</comment>
<comment type="similarity">
    <text evidence="1">Belongs to the AIR synthase family.</text>
</comment>
<name>PUR5_PSE14</name>
<sequence>MSKQPSLSYKDAGVDIDAGEALVERIKSVAKRTKRPEVMGGLGGFGALCEIPAGYKQPVLVSGTDGVGTKLRLALNLNKHDTIGIDLVAMCVNDLVVCGAEPLFFLDYYATGKLNVDTAAQVVTGIGAGCELAGCSLVGGETAEMPGMYEGEDYDLAGFCVGVVEKAEIIDGSKVAAGDALLALPSSGPHSNGYSLIRKIIEVAGADIESIQLDGKPLTELLMAPTRIYVKPLLKLIKETGAVKAMAHITGGGLLDNIPRVLPEGAQAVVDVASWQRPAVFDWLQQQGNVAENEMHRVLNCGVGMVICVAQEHVEAALKVLREAGEQPWVIGQIATAAEGAAQVELKNLKAH</sequence>
<gene>
    <name evidence="1" type="primary">purM</name>
    <name type="ordered locus">PSPPH_3710</name>
</gene>
<feature type="chain" id="PRO_0000258385" description="Phosphoribosylformylglycinamidine cyclo-ligase">
    <location>
        <begin position="1"/>
        <end position="352"/>
    </location>
</feature>
<reference key="1">
    <citation type="journal article" date="2005" name="J. Bacteriol.">
        <title>Whole-genome sequence analysis of Pseudomonas syringae pv. phaseolicola 1448A reveals divergence among pathovars in genes involved in virulence and transposition.</title>
        <authorList>
            <person name="Joardar V."/>
            <person name="Lindeberg M."/>
            <person name="Jackson R.W."/>
            <person name="Selengut J."/>
            <person name="Dodson R."/>
            <person name="Brinkac L.M."/>
            <person name="Daugherty S.C."/>
            <person name="DeBoy R.T."/>
            <person name="Durkin A.S."/>
            <person name="Gwinn Giglio M."/>
            <person name="Madupu R."/>
            <person name="Nelson W.C."/>
            <person name="Rosovitz M.J."/>
            <person name="Sullivan S.A."/>
            <person name="Crabtree J."/>
            <person name="Creasy T."/>
            <person name="Davidsen T.M."/>
            <person name="Haft D.H."/>
            <person name="Zafar N."/>
            <person name="Zhou L."/>
            <person name="Halpin R."/>
            <person name="Holley T."/>
            <person name="Khouri H.M."/>
            <person name="Feldblyum T.V."/>
            <person name="White O."/>
            <person name="Fraser C.M."/>
            <person name="Chatterjee A.K."/>
            <person name="Cartinhour S."/>
            <person name="Schneider D."/>
            <person name="Mansfield J.W."/>
            <person name="Collmer A."/>
            <person name="Buell R."/>
        </authorList>
    </citation>
    <scope>NUCLEOTIDE SEQUENCE [LARGE SCALE GENOMIC DNA]</scope>
    <source>
        <strain>1448A / Race 6</strain>
    </source>
</reference>
<organism>
    <name type="scientific">Pseudomonas savastanoi pv. phaseolicola (strain 1448A / Race 6)</name>
    <name type="common">Pseudomonas syringae pv. phaseolicola (strain 1448A / Race 6)</name>
    <dbReference type="NCBI Taxonomy" id="264730"/>
    <lineage>
        <taxon>Bacteria</taxon>
        <taxon>Pseudomonadati</taxon>
        <taxon>Pseudomonadota</taxon>
        <taxon>Gammaproteobacteria</taxon>
        <taxon>Pseudomonadales</taxon>
        <taxon>Pseudomonadaceae</taxon>
        <taxon>Pseudomonas</taxon>
    </lineage>
</organism>
<dbReference type="EC" id="6.3.3.1" evidence="1"/>
<dbReference type="EMBL" id="CP000058">
    <property type="protein sequence ID" value="AAZ35802.1"/>
    <property type="molecule type" value="Genomic_DNA"/>
</dbReference>
<dbReference type="RefSeq" id="WP_004657213.1">
    <property type="nucleotide sequence ID" value="NC_005773.3"/>
</dbReference>
<dbReference type="SMR" id="Q48FI4"/>
<dbReference type="KEGG" id="psp:PSPPH_3710"/>
<dbReference type="eggNOG" id="COG0150">
    <property type="taxonomic scope" value="Bacteria"/>
</dbReference>
<dbReference type="HOGENOM" id="CLU_047116_0_0_6"/>
<dbReference type="UniPathway" id="UPA00074">
    <property type="reaction ID" value="UER00129"/>
</dbReference>
<dbReference type="Proteomes" id="UP000000551">
    <property type="component" value="Chromosome"/>
</dbReference>
<dbReference type="GO" id="GO:0005829">
    <property type="term" value="C:cytosol"/>
    <property type="evidence" value="ECO:0007669"/>
    <property type="project" value="TreeGrafter"/>
</dbReference>
<dbReference type="GO" id="GO:0005524">
    <property type="term" value="F:ATP binding"/>
    <property type="evidence" value="ECO:0007669"/>
    <property type="project" value="UniProtKB-KW"/>
</dbReference>
<dbReference type="GO" id="GO:0004637">
    <property type="term" value="F:phosphoribosylamine-glycine ligase activity"/>
    <property type="evidence" value="ECO:0007669"/>
    <property type="project" value="TreeGrafter"/>
</dbReference>
<dbReference type="GO" id="GO:0004641">
    <property type="term" value="F:phosphoribosylformylglycinamidine cyclo-ligase activity"/>
    <property type="evidence" value="ECO:0007669"/>
    <property type="project" value="UniProtKB-UniRule"/>
</dbReference>
<dbReference type="GO" id="GO:0006189">
    <property type="term" value="P:'de novo' IMP biosynthetic process"/>
    <property type="evidence" value="ECO:0007669"/>
    <property type="project" value="UniProtKB-UniRule"/>
</dbReference>
<dbReference type="GO" id="GO:0046084">
    <property type="term" value="P:adenine biosynthetic process"/>
    <property type="evidence" value="ECO:0007669"/>
    <property type="project" value="TreeGrafter"/>
</dbReference>
<dbReference type="CDD" id="cd02196">
    <property type="entry name" value="PurM"/>
    <property type="match status" value="1"/>
</dbReference>
<dbReference type="FunFam" id="3.30.1330.10:FF:000001">
    <property type="entry name" value="Phosphoribosylformylglycinamidine cyclo-ligase"/>
    <property type="match status" value="1"/>
</dbReference>
<dbReference type="FunFam" id="3.90.650.10:FF:000001">
    <property type="entry name" value="Phosphoribosylformylglycinamidine cyclo-ligase"/>
    <property type="match status" value="1"/>
</dbReference>
<dbReference type="Gene3D" id="3.90.650.10">
    <property type="entry name" value="PurM-like C-terminal domain"/>
    <property type="match status" value="1"/>
</dbReference>
<dbReference type="Gene3D" id="3.30.1330.10">
    <property type="entry name" value="PurM-like, N-terminal domain"/>
    <property type="match status" value="1"/>
</dbReference>
<dbReference type="HAMAP" id="MF_00741">
    <property type="entry name" value="AIRS"/>
    <property type="match status" value="1"/>
</dbReference>
<dbReference type="InterPro" id="IPR010918">
    <property type="entry name" value="PurM-like_C_dom"/>
</dbReference>
<dbReference type="InterPro" id="IPR036676">
    <property type="entry name" value="PurM-like_C_sf"/>
</dbReference>
<dbReference type="InterPro" id="IPR016188">
    <property type="entry name" value="PurM-like_N"/>
</dbReference>
<dbReference type="InterPro" id="IPR036921">
    <property type="entry name" value="PurM-like_N_sf"/>
</dbReference>
<dbReference type="InterPro" id="IPR004733">
    <property type="entry name" value="PurM_cligase"/>
</dbReference>
<dbReference type="NCBIfam" id="TIGR00878">
    <property type="entry name" value="purM"/>
    <property type="match status" value="1"/>
</dbReference>
<dbReference type="PANTHER" id="PTHR10520:SF12">
    <property type="entry name" value="TRIFUNCTIONAL PURINE BIOSYNTHETIC PROTEIN ADENOSINE-3"/>
    <property type="match status" value="1"/>
</dbReference>
<dbReference type="PANTHER" id="PTHR10520">
    <property type="entry name" value="TRIFUNCTIONAL PURINE BIOSYNTHETIC PROTEIN ADENOSINE-3-RELATED"/>
    <property type="match status" value="1"/>
</dbReference>
<dbReference type="Pfam" id="PF00586">
    <property type="entry name" value="AIRS"/>
    <property type="match status" value="1"/>
</dbReference>
<dbReference type="Pfam" id="PF02769">
    <property type="entry name" value="AIRS_C"/>
    <property type="match status" value="1"/>
</dbReference>
<dbReference type="SUPFAM" id="SSF56042">
    <property type="entry name" value="PurM C-terminal domain-like"/>
    <property type="match status" value="1"/>
</dbReference>
<dbReference type="SUPFAM" id="SSF55326">
    <property type="entry name" value="PurM N-terminal domain-like"/>
    <property type="match status" value="1"/>
</dbReference>
<accession>Q48FI4</accession>
<protein>
    <recommendedName>
        <fullName evidence="1">Phosphoribosylformylglycinamidine cyclo-ligase</fullName>
        <ecNumber evidence="1">6.3.3.1</ecNumber>
    </recommendedName>
    <alternativeName>
        <fullName evidence="1">AIR synthase</fullName>
    </alternativeName>
    <alternativeName>
        <fullName evidence="1">AIRS</fullName>
    </alternativeName>
    <alternativeName>
        <fullName evidence="1">Phosphoribosyl-aminoimidazole synthetase</fullName>
    </alternativeName>
</protein>
<evidence type="ECO:0000255" key="1">
    <source>
        <dbReference type="HAMAP-Rule" id="MF_00741"/>
    </source>
</evidence>
<proteinExistence type="inferred from homology"/>